<keyword id="KW-0997">Cell inner membrane</keyword>
<keyword id="KW-1003">Cell membrane</keyword>
<keyword id="KW-0472">Membrane</keyword>
<keyword id="KW-0653">Protein transport</keyword>
<keyword id="KW-0811">Translocation</keyword>
<keyword id="KW-0812">Transmembrane</keyword>
<keyword id="KW-1133">Transmembrane helix</keyword>
<keyword id="KW-0813">Transport</keyword>
<accession>Q0AET6</accession>
<proteinExistence type="inferred from homology"/>
<sequence>MFDISFTELIVIGIVALVVIGPERLPAVARTAGYFLGRARRYIEQVKRDLNEEMELDSLRKLRDSMHETVDSFQNSVHSEINKIQETADTRPAAVPEKESHAVESGGKTEPENTEAAASSTPKEPRQSGS</sequence>
<protein>
    <recommendedName>
        <fullName evidence="1">Sec-independent protein translocase protein TatB</fullName>
    </recommendedName>
</protein>
<feature type="chain" id="PRO_0000301200" description="Sec-independent protein translocase protein TatB">
    <location>
        <begin position="1"/>
        <end position="130"/>
    </location>
</feature>
<feature type="transmembrane region" description="Helical" evidence="1">
    <location>
        <begin position="1"/>
        <end position="21"/>
    </location>
</feature>
<feature type="region of interest" description="Disordered" evidence="2">
    <location>
        <begin position="70"/>
        <end position="130"/>
    </location>
</feature>
<feature type="compositionally biased region" description="Basic and acidic residues" evidence="2">
    <location>
        <begin position="80"/>
        <end position="89"/>
    </location>
</feature>
<feature type="compositionally biased region" description="Basic and acidic residues" evidence="2">
    <location>
        <begin position="96"/>
        <end position="111"/>
    </location>
</feature>
<reference key="1">
    <citation type="journal article" date="2007" name="Environ. Microbiol.">
        <title>Whole-genome analysis of the ammonia-oxidizing bacterium, Nitrosomonas eutropha C91: implications for niche adaptation.</title>
        <authorList>
            <person name="Stein L.Y."/>
            <person name="Arp D.J."/>
            <person name="Berube P.M."/>
            <person name="Chain P.S."/>
            <person name="Hauser L."/>
            <person name="Jetten M.S."/>
            <person name="Klotz M.G."/>
            <person name="Larimer F.W."/>
            <person name="Norton J.M."/>
            <person name="Op den Camp H.J.M."/>
            <person name="Shin M."/>
            <person name="Wei X."/>
        </authorList>
    </citation>
    <scope>NUCLEOTIDE SEQUENCE [LARGE SCALE GENOMIC DNA]</scope>
    <source>
        <strain>DSM 101675 / C91 / Nm57</strain>
    </source>
</reference>
<evidence type="ECO:0000255" key="1">
    <source>
        <dbReference type="HAMAP-Rule" id="MF_00237"/>
    </source>
</evidence>
<evidence type="ECO:0000256" key="2">
    <source>
        <dbReference type="SAM" id="MobiDB-lite"/>
    </source>
</evidence>
<gene>
    <name evidence="1" type="primary">tatB</name>
    <name type="ordered locus">Neut_1914</name>
</gene>
<name>TATB_NITEC</name>
<dbReference type="EMBL" id="CP000450">
    <property type="protein sequence ID" value="ABI60146.1"/>
    <property type="molecule type" value="Genomic_DNA"/>
</dbReference>
<dbReference type="RefSeq" id="WP_011634948.1">
    <property type="nucleotide sequence ID" value="NC_008344.1"/>
</dbReference>
<dbReference type="SMR" id="Q0AET6"/>
<dbReference type="STRING" id="335283.Neut_1914"/>
<dbReference type="KEGG" id="net:Neut_1914"/>
<dbReference type="eggNOG" id="COG1826">
    <property type="taxonomic scope" value="Bacteria"/>
</dbReference>
<dbReference type="HOGENOM" id="CLU_086034_1_1_4"/>
<dbReference type="OrthoDB" id="9816005at2"/>
<dbReference type="Proteomes" id="UP000001966">
    <property type="component" value="Chromosome"/>
</dbReference>
<dbReference type="GO" id="GO:0033281">
    <property type="term" value="C:TAT protein transport complex"/>
    <property type="evidence" value="ECO:0007669"/>
    <property type="project" value="UniProtKB-UniRule"/>
</dbReference>
<dbReference type="GO" id="GO:0008320">
    <property type="term" value="F:protein transmembrane transporter activity"/>
    <property type="evidence" value="ECO:0007669"/>
    <property type="project" value="UniProtKB-UniRule"/>
</dbReference>
<dbReference type="GO" id="GO:0043953">
    <property type="term" value="P:protein transport by the Tat complex"/>
    <property type="evidence" value="ECO:0007669"/>
    <property type="project" value="UniProtKB-UniRule"/>
</dbReference>
<dbReference type="Gene3D" id="1.20.5.3310">
    <property type="match status" value="1"/>
</dbReference>
<dbReference type="HAMAP" id="MF_00237">
    <property type="entry name" value="TatB"/>
    <property type="match status" value="1"/>
</dbReference>
<dbReference type="InterPro" id="IPR003369">
    <property type="entry name" value="TatA/B/E"/>
</dbReference>
<dbReference type="InterPro" id="IPR018448">
    <property type="entry name" value="TatB"/>
</dbReference>
<dbReference type="NCBIfam" id="TIGR01410">
    <property type="entry name" value="tatB"/>
    <property type="match status" value="1"/>
</dbReference>
<dbReference type="PANTHER" id="PTHR33162">
    <property type="entry name" value="SEC-INDEPENDENT PROTEIN TRANSLOCASE PROTEIN TATA, CHLOROPLASTIC"/>
    <property type="match status" value="1"/>
</dbReference>
<dbReference type="PANTHER" id="PTHR33162:SF1">
    <property type="entry name" value="SEC-INDEPENDENT PROTEIN TRANSLOCASE PROTEIN TATA, CHLOROPLASTIC"/>
    <property type="match status" value="1"/>
</dbReference>
<dbReference type="Pfam" id="PF02416">
    <property type="entry name" value="TatA_B_E"/>
    <property type="match status" value="1"/>
</dbReference>
<dbReference type="PRINTS" id="PR01506">
    <property type="entry name" value="TATBPROTEIN"/>
</dbReference>
<comment type="function">
    <text evidence="1">Part of the twin-arginine translocation (Tat) system that transports large folded proteins containing a characteristic twin-arginine motif in their signal peptide across membranes. Together with TatC, TatB is part of a receptor directly interacting with Tat signal peptides. TatB may form an oligomeric binding site that transiently accommodates folded Tat precursor proteins before their translocation.</text>
</comment>
<comment type="subunit">
    <text evidence="1">The Tat system comprises two distinct complexes: a TatABC complex, containing multiple copies of TatA, TatB and TatC subunits, and a separate TatA complex, containing only TatA subunits. Substrates initially bind to the TatABC complex, which probably triggers association of the separate TatA complex to form the active translocon.</text>
</comment>
<comment type="subcellular location">
    <subcellularLocation>
        <location evidence="1">Cell inner membrane</location>
        <topology evidence="1">Single-pass membrane protein</topology>
    </subcellularLocation>
</comment>
<comment type="similarity">
    <text evidence="1">Belongs to the TatB family.</text>
</comment>
<organism>
    <name type="scientific">Nitrosomonas eutropha (strain DSM 101675 / C91 / Nm57)</name>
    <dbReference type="NCBI Taxonomy" id="335283"/>
    <lineage>
        <taxon>Bacteria</taxon>
        <taxon>Pseudomonadati</taxon>
        <taxon>Pseudomonadota</taxon>
        <taxon>Betaproteobacteria</taxon>
        <taxon>Nitrosomonadales</taxon>
        <taxon>Nitrosomonadaceae</taxon>
        <taxon>Nitrosomonas</taxon>
    </lineage>
</organism>